<accession>Q1D6E0</accession>
<feature type="chain" id="PRO_1000006864" description="Phenylalanine--tRNA ligase alpha subunit">
    <location>
        <begin position="1"/>
        <end position="349"/>
    </location>
</feature>
<feature type="binding site" evidence="1">
    <location>
        <position position="264"/>
    </location>
    <ligand>
        <name>Mg(2+)</name>
        <dbReference type="ChEBI" id="CHEBI:18420"/>
        <note>shared with beta subunit</note>
    </ligand>
</feature>
<proteinExistence type="inferred from homology"/>
<dbReference type="EC" id="6.1.1.20" evidence="1"/>
<dbReference type="EMBL" id="CP000113">
    <property type="protein sequence ID" value="ABF92311.1"/>
    <property type="molecule type" value="Genomic_DNA"/>
</dbReference>
<dbReference type="RefSeq" id="WP_011553619.1">
    <property type="nucleotide sequence ID" value="NC_008095.1"/>
</dbReference>
<dbReference type="SMR" id="Q1D6E0"/>
<dbReference type="STRING" id="246197.MXAN_3594"/>
<dbReference type="EnsemblBacteria" id="ABF92311">
    <property type="protein sequence ID" value="ABF92311"/>
    <property type="gene ID" value="MXAN_3594"/>
</dbReference>
<dbReference type="GeneID" id="41360940"/>
<dbReference type="KEGG" id="mxa:MXAN_3594"/>
<dbReference type="eggNOG" id="COG0016">
    <property type="taxonomic scope" value="Bacteria"/>
</dbReference>
<dbReference type="HOGENOM" id="CLU_025086_0_1_7"/>
<dbReference type="OrthoDB" id="9800719at2"/>
<dbReference type="Proteomes" id="UP000002402">
    <property type="component" value="Chromosome"/>
</dbReference>
<dbReference type="GO" id="GO:0005737">
    <property type="term" value="C:cytoplasm"/>
    <property type="evidence" value="ECO:0007669"/>
    <property type="project" value="UniProtKB-SubCell"/>
</dbReference>
<dbReference type="GO" id="GO:0005524">
    <property type="term" value="F:ATP binding"/>
    <property type="evidence" value="ECO:0007669"/>
    <property type="project" value="UniProtKB-UniRule"/>
</dbReference>
<dbReference type="GO" id="GO:0000287">
    <property type="term" value="F:magnesium ion binding"/>
    <property type="evidence" value="ECO:0007669"/>
    <property type="project" value="UniProtKB-UniRule"/>
</dbReference>
<dbReference type="GO" id="GO:0004826">
    <property type="term" value="F:phenylalanine-tRNA ligase activity"/>
    <property type="evidence" value="ECO:0007669"/>
    <property type="project" value="UniProtKB-UniRule"/>
</dbReference>
<dbReference type="GO" id="GO:0000049">
    <property type="term" value="F:tRNA binding"/>
    <property type="evidence" value="ECO:0007669"/>
    <property type="project" value="InterPro"/>
</dbReference>
<dbReference type="GO" id="GO:0006432">
    <property type="term" value="P:phenylalanyl-tRNA aminoacylation"/>
    <property type="evidence" value="ECO:0007669"/>
    <property type="project" value="UniProtKB-UniRule"/>
</dbReference>
<dbReference type="CDD" id="cd00496">
    <property type="entry name" value="PheRS_alpha_core"/>
    <property type="match status" value="1"/>
</dbReference>
<dbReference type="FunFam" id="3.30.930.10:FF:000003">
    <property type="entry name" value="Phenylalanine--tRNA ligase alpha subunit"/>
    <property type="match status" value="1"/>
</dbReference>
<dbReference type="Gene3D" id="3.30.930.10">
    <property type="entry name" value="Bira Bifunctional Protein, Domain 2"/>
    <property type="match status" value="1"/>
</dbReference>
<dbReference type="HAMAP" id="MF_00281">
    <property type="entry name" value="Phe_tRNA_synth_alpha1"/>
    <property type="match status" value="1"/>
</dbReference>
<dbReference type="InterPro" id="IPR006195">
    <property type="entry name" value="aa-tRNA-synth_II"/>
</dbReference>
<dbReference type="InterPro" id="IPR045864">
    <property type="entry name" value="aa-tRNA-synth_II/BPL/LPL"/>
</dbReference>
<dbReference type="InterPro" id="IPR004529">
    <property type="entry name" value="Phe-tRNA-synth_IIc_asu"/>
</dbReference>
<dbReference type="InterPro" id="IPR004188">
    <property type="entry name" value="Phe-tRNA_ligase_II_N"/>
</dbReference>
<dbReference type="InterPro" id="IPR022911">
    <property type="entry name" value="Phe_tRNA_ligase_alpha1_bac"/>
</dbReference>
<dbReference type="InterPro" id="IPR002319">
    <property type="entry name" value="Phenylalanyl-tRNA_Synthase"/>
</dbReference>
<dbReference type="InterPro" id="IPR010978">
    <property type="entry name" value="tRNA-bd_arm"/>
</dbReference>
<dbReference type="NCBIfam" id="TIGR00468">
    <property type="entry name" value="pheS"/>
    <property type="match status" value="1"/>
</dbReference>
<dbReference type="PANTHER" id="PTHR11538:SF41">
    <property type="entry name" value="PHENYLALANINE--TRNA LIGASE, MITOCHONDRIAL"/>
    <property type="match status" value="1"/>
</dbReference>
<dbReference type="PANTHER" id="PTHR11538">
    <property type="entry name" value="PHENYLALANYL-TRNA SYNTHETASE"/>
    <property type="match status" value="1"/>
</dbReference>
<dbReference type="Pfam" id="PF02912">
    <property type="entry name" value="Phe_tRNA-synt_N"/>
    <property type="match status" value="1"/>
</dbReference>
<dbReference type="Pfam" id="PF01409">
    <property type="entry name" value="tRNA-synt_2d"/>
    <property type="match status" value="1"/>
</dbReference>
<dbReference type="SUPFAM" id="SSF55681">
    <property type="entry name" value="Class II aaRS and biotin synthetases"/>
    <property type="match status" value="1"/>
</dbReference>
<dbReference type="SUPFAM" id="SSF46589">
    <property type="entry name" value="tRNA-binding arm"/>
    <property type="match status" value="1"/>
</dbReference>
<dbReference type="PROSITE" id="PS50862">
    <property type="entry name" value="AA_TRNA_LIGASE_II"/>
    <property type="match status" value="1"/>
</dbReference>
<sequence length="349" mass="38525">MRDRLLALAESARREIGGASELSAVEALRVRYLGKKGELSGVLGGMGKLPPDERRSLGEVANSVKAELEKLLAEAVERAEAAALEAQLQGPGLDVTLPGRGVALGSRHPVSRTMEEIVRTFSRLGFDVASGPEIELDYFNFEALNLPKDHPARDMQDTFYVDEATLGHAKKADSSALLRTHTSPVQVRYMLNRKPPIRAVMPGRVYRRDSDITHTPMFHQVEGLLVDKGVTFAELKGSLAAFVTAFFGSDTRTRFRPSFFPFTEPSAEVDITCTNCAGKGCRICKQTGWLEVLGSGMVHPNVFTSAGYDPNEVTGYAFGMGVERIAMLRYRIDDLRMMFENDARFLEQF</sequence>
<protein>
    <recommendedName>
        <fullName evidence="1">Phenylalanine--tRNA ligase alpha subunit</fullName>
        <ecNumber evidence="1">6.1.1.20</ecNumber>
    </recommendedName>
    <alternativeName>
        <fullName evidence="1">Phenylalanyl-tRNA synthetase alpha subunit</fullName>
        <shortName evidence="1">PheRS</shortName>
    </alternativeName>
</protein>
<reference key="1">
    <citation type="journal article" date="2006" name="Proc. Natl. Acad. Sci. U.S.A.">
        <title>Evolution of sensory complexity recorded in a myxobacterial genome.</title>
        <authorList>
            <person name="Goldman B.S."/>
            <person name="Nierman W.C."/>
            <person name="Kaiser D."/>
            <person name="Slater S.C."/>
            <person name="Durkin A.S."/>
            <person name="Eisen J.A."/>
            <person name="Ronning C.M."/>
            <person name="Barbazuk W.B."/>
            <person name="Blanchard M."/>
            <person name="Field C."/>
            <person name="Halling C."/>
            <person name="Hinkle G."/>
            <person name="Iartchuk O."/>
            <person name="Kim H.S."/>
            <person name="Mackenzie C."/>
            <person name="Madupu R."/>
            <person name="Miller N."/>
            <person name="Shvartsbeyn A."/>
            <person name="Sullivan S.A."/>
            <person name="Vaudin M."/>
            <person name="Wiegand R."/>
            <person name="Kaplan H.B."/>
        </authorList>
    </citation>
    <scope>NUCLEOTIDE SEQUENCE [LARGE SCALE GENOMIC DNA]</scope>
    <source>
        <strain>DK1622</strain>
    </source>
</reference>
<keyword id="KW-0030">Aminoacyl-tRNA synthetase</keyword>
<keyword id="KW-0067">ATP-binding</keyword>
<keyword id="KW-0963">Cytoplasm</keyword>
<keyword id="KW-0436">Ligase</keyword>
<keyword id="KW-0460">Magnesium</keyword>
<keyword id="KW-0479">Metal-binding</keyword>
<keyword id="KW-0547">Nucleotide-binding</keyword>
<keyword id="KW-0648">Protein biosynthesis</keyword>
<keyword id="KW-1185">Reference proteome</keyword>
<gene>
    <name evidence="1" type="primary">pheS</name>
    <name type="ordered locus">MXAN_3594</name>
</gene>
<comment type="catalytic activity">
    <reaction evidence="1">
        <text>tRNA(Phe) + L-phenylalanine + ATP = L-phenylalanyl-tRNA(Phe) + AMP + diphosphate + H(+)</text>
        <dbReference type="Rhea" id="RHEA:19413"/>
        <dbReference type="Rhea" id="RHEA-COMP:9668"/>
        <dbReference type="Rhea" id="RHEA-COMP:9699"/>
        <dbReference type="ChEBI" id="CHEBI:15378"/>
        <dbReference type="ChEBI" id="CHEBI:30616"/>
        <dbReference type="ChEBI" id="CHEBI:33019"/>
        <dbReference type="ChEBI" id="CHEBI:58095"/>
        <dbReference type="ChEBI" id="CHEBI:78442"/>
        <dbReference type="ChEBI" id="CHEBI:78531"/>
        <dbReference type="ChEBI" id="CHEBI:456215"/>
        <dbReference type="EC" id="6.1.1.20"/>
    </reaction>
</comment>
<comment type="cofactor">
    <cofactor evidence="1">
        <name>Mg(2+)</name>
        <dbReference type="ChEBI" id="CHEBI:18420"/>
    </cofactor>
    <text evidence="1">Binds 2 magnesium ions per tetramer.</text>
</comment>
<comment type="subunit">
    <text evidence="1">Tetramer of two alpha and two beta subunits.</text>
</comment>
<comment type="subcellular location">
    <subcellularLocation>
        <location evidence="1">Cytoplasm</location>
    </subcellularLocation>
</comment>
<comment type="similarity">
    <text evidence="1">Belongs to the class-II aminoacyl-tRNA synthetase family. Phe-tRNA synthetase alpha subunit type 1 subfamily.</text>
</comment>
<name>SYFA_MYXXD</name>
<organism>
    <name type="scientific">Myxococcus xanthus (strain DK1622)</name>
    <dbReference type="NCBI Taxonomy" id="246197"/>
    <lineage>
        <taxon>Bacteria</taxon>
        <taxon>Pseudomonadati</taxon>
        <taxon>Myxococcota</taxon>
        <taxon>Myxococcia</taxon>
        <taxon>Myxococcales</taxon>
        <taxon>Cystobacterineae</taxon>
        <taxon>Myxococcaceae</taxon>
        <taxon>Myxococcus</taxon>
    </lineage>
</organism>
<evidence type="ECO:0000255" key="1">
    <source>
        <dbReference type="HAMAP-Rule" id="MF_00281"/>
    </source>
</evidence>